<protein>
    <recommendedName>
        <fullName>Tegument protein VP16 homolog</fullName>
    </recommendedName>
    <alternativeName>
        <fullName>Alpha trans-inducing protein</fullName>
    </alternativeName>
    <alternativeName>
        <fullName>Alpha-TIF</fullName>
    </alternativeName>
    <alternativeName>
        <fullName>ORF10 protein</fullName>
    </alternativeName>
    <alternativeName>
        <fullName>Tegument protein 10</fullName>
    </alternativeName>
</protein>
<evidence type="ECO:0000250" key="1"/>
<evidence type="ECO:0000250" key="2">
    <source>
        <dbReference type="UniProtKB" id="P04486"/>
    </source>
</evidence>
<evidence type="ECO:0000256" key="3">
    <source>
        <dbReference type="SAM" id="MobiDB-lite"/>
    </source>
</evidence>
<evidence type="ECO:0000305" key="4"/>
<name>VP16_VZVO</name>
<comment type="function">
    <text evidence="1">Transcriptional activator of immediate-early (IE) gene products (alpha genes). Acts as a key activator of lytic infection by initiating the lytic program through the assembly of the transcriptional regulatory VP16-induced complex composed of VP16 and two cellular factors, HCFC1 and POU2F 1. VP16-induced complex represents a regulatory switch: when it is on, it promotes IE-gene expression and thus lytic infection, and when it is off, it limits IE-gene transcription favoring latent infection (By similarity).</text>
</comment>
<comment type="function">
    <text evidence="4">May play a role in the aggregation of tegument proteins around nucleocapsids during virus morphogenesis.</text>
</comment>
<comment type="subunit">
    <text evidence="1">Associates with the VP16-induced complex; binding to host HCFC1 activates VP16 for association with the octamer motif-binding host protein POU2F1, to form a multiprotein-DNA complex responsible for activating transcription of the viral immediate early genes.</text>
</comment>
<comment type="subcellular location">
    <subcellularLocation>
        <location evidence="2">Virion tegument</location>
    </subcellularLocation>
    <subcellularLocation>
        <location evidence="2">Host nucleus</location>
    </subcellularLocation>
</comment>
<comment type="similarity">
    <text evidence="4">Belongs to the herpesviridae tegument protein VP16 protein family.</text>
</comment>
<reference key="1">
    <citation type="journal article" date="2002" name="J. Virol.">
        <title>Comparison of the complete DNA sequences of the Oka varicella vaccine and its parental virus.</title>
        <authorList>
            <person name="Gomi Y."/>
            <person name="Sunamachi H."/>
            <person name="Mori Y."/>
            <person name="Nagaike K."/>
            <person name="Takahashi M."/>
            <person name="Yamanishi K."/>
        </authorList>
    </citation>
    <scope>NUCLEOTIDE SEQUENCE [LARGE SCALE GENOMIC DNA]</scope>
    <source>
        <strain>Isolate Human/Japan/P-Oka/1970</strain>
        <strain>Oka varicella vaccine Biken (V-Oka-Biken)</strain>
    </source>
</reference>
<reference key="2">
    <citation type="journal article" date="2008" name="J. Virol.">
        <title>Complete DNA sequences of two oka strain varicella-zoster virus genomes.</title>
        <authorList>
            <person name="Tillieux S.L."/>
            <person name="Halsey W.S."/>
            <person name="Thomas E.S."/>
            <person name="Voycik J.J."/>
            <person name="Sathe G.M."/>
            <person name="Vassilev V."/>
        </authorList>
    </citation>
    <scope>NUCLEOTIDE SEQUENCE [LARGE SCALE GENOMIC DNA]</scope>
    <source>
        <strain>Oka varicella vaccine VarilRix (V-Oka-GSK)</strain>
        <strain>Oka varicella vaccine Varivax (V-Oka-Merck)</strain>
    </source>
</reference>
<keyword id="KW-0238">DNA-binding</keyword>
<keyword id="KW-1048">Host nucleus</keyword>
<keyword id="KW-0597">Phosphoprotein</keyword>
<keyword id="KW-0804">Transcription</keyword>
<keyword id="KW-0805">Transcription regulation</keyword>
<keyword id="KW-0946">Virion</keyword>
<keyword id="KW-0920">Virion tegument</keyword>
<gene>
    <name type="ORF">ORF10</name>
</gene>
<organism>
    <name type="scientific">Varicella-zoster virus (strain Oka vaccine)</name>
    <name type="common">HHV-3</name>
    <name type="synonym">Human herpesvirus 3</name>
    <dbReference type="NCBI Taxonomy" id="341980"/>
    <lineage>
        <taxon>Viruses</taxon>
        <taxon>Duplodnaviria</taxon>
        <taxon>Heunggongvirae</taxon>
        <taxon>Peploviricota</taxon>
        <taxon>Herviviricetes</taxon>
        <taxon>Herpesvirales</taxon>
        <taxon>Orthoherpesviridae</taxon>
        <taxon>Alphaherpesvirinae</taxon>
        <taxon>Varicellovirus</taxon>
        <taxon>Varicellovirus humanalpha3</taxon>
        <taxon>Human herpesvirus 3</taxon>
    </lineage>
</organism>
<feature type="chain" id="PRO_0000385480" description="Tegument protein VP16 homolog">
    <location>
        <begin position="1"/>
        <end position="410"/>
    </location>
</feature>
<feature type="region of interest" description="Disordered" evidence="3">
    <location>
        <begin position="388"/>
        <end position="410"/>
    </location>
</feature>
<proteinExistence type="inferred from homology"/>
<dbReference type="EMBL" id="AB097932">
    <property type="status" value="NOT_ANNOTATED_CDS"/>
    <property type="molecule type" value="Genomic_DNA"/>
</dbReference>
<dbReference type="EMBL" id="AB097933">
    <property type="status" value="NOT_ANNOTATED_CDS"/>
    <property type="molecule type" value="Genomic_DNA"/>
</dbReference>
<dbReference type="EMBL" id="DQ008354">
    <property type="protein sequence ID" value="AAY57628.1"/>
    <property type="molecule type" value="Genomic_DNA"/>
</dbReference>
<dbReference type="EMBL" id="DQ008355">
    <property type="protein sequence ID" value="AAY57699.1"/>
    <property type="molecule type" value="Genomic_DNA"/>
</dbReference>
<dbReference type="SMR" id="Q4JQW5"/>
<dbReference type="IntAct" id="Q4JQW5">
    <property type="interactions" value="3"/>
</dbReference>
<dbReference type="MINT" id="Q4JQW5"/>
<dbReference type="Proteomes" id="UP000002603">
    <property type="component" value="Genome"/>
</dbReference>
<dbReference type="Proteomes" id="UP000008504">
    <property type="component" value="Genome"/>
</dbReference>
<dbReference type="Proteomes" id="UP000008505">
    <property type="component" value="Genome"/>
</dbReference>
<dbReference type="Proteomes" id="UP000008506">
    <property type="component" value="Genome"/>
</dbReference>
<dbReference type="GO" id="GO:0042025">
    <property type="term" value="C:host cell nucleus"/>
    <property type="evidence" value="ECO:0007669"/>
    <property type="project" value="UniProtKB-SubCell"/>
</dbReference>
<dbReference type="GO" id="GO:0019033">
    <property type="term" value="C:viral tegument"/>
    <property type="evidence" value="ECO:0007669"/>
    <property type="project" value="UniProtKB-SubCell"/>
</dbReference>
<dbReference type="GO" id="GO:0003677">
    <property type="term" value="F:DNA binding"/>
    <property type="evidence" value="ECO:0007669"/>
    <property type="project" value="UniProtKB-KW"/>
</dbReference>
<dbReference type="GO" id="GO:0039695">
    <property type="term" value="P:DNA-templated viral transcription"/>
    <property type="evidence" value="ECO:0000250"/>
    <property type="project" value="UniProtKB"/>
</dbReference>
<dbReference type="GO" id="GO:0006355">
    <property type="term" value="P:regulation of DNA-templated transcription"/>
    <property type="evidence" value="ECO:0007669"/>
    <property type="project" value="InterPro"/>
</dbReference>
<dbReference type="FunFam" id="1.10.1290.10:FF:000001">
    <property type="entry name" value="Tegument protein VP16"/>
    <property type="match status" value="1"/>
</dbReference>
<dbReference type="Gene3D" id="1.10.1290.10">
    <property type="entry name" value="Alpha trans-inducing (Alpha-TIF)"/>
    <property type="match status" value="1"/>
</dbReference>
<dbReference type="InterPro" id="IPR003174">
    <property type="entry name" value="Alpha_TIF"/>
</dbReference>
<dbReference type="InterPro" id="IPR036538">
    <property type="entry name" value="Alpha_TIF_sf"/>
</dbReference>
<dbReference type="Pfam" id="PF02232">
    <property type="entry name" value="Alpha_TIF"/>
    <property type="match status" value="1"/>
</dbReference>
<dbReference type="SMART" id="SM00814">
    <property type="entry name" value="Alpha_TIF"/>
    <property type="match status" value="1"/>
</dbReference>
<dbReference type="SUPFAM" id="SSF56548">
    <property type="entry name" value="Conserved core of transcriptional regulatory protein vp16"/>
    <property type="match status" value="1"/>
</dbReference>
<organismHost>
    <name type="scientific">Homo sapiens</name>
    <name type="common">Human</name>
    <dbReference type="NCBI Taxonomy" id="9606"/>
</organismHost>
<sequence length="410" mass="46555">MECNLGTEHHSTDTWNRSKTEQAVVDAFDESLFGDVASDIGSETSLYSHAVKTAPSPPWVASPKILYQQLIRDLDFSEGPRLLSCLETWNEDLFSCFPINEDLYSDMMVLSPDPDDVISTVSTKDHVEMFNLTTRGSVRLPSPPKQPTGLPAYVQEVQDSFTVELRAREEAYTKLLVTYCKSIIRYLQGTAKRTTIGLNIQNPDQKAYTQLRQSILLRYYREVASLARLLYLHLYLTVTREFSWRLYASQSAHPDVFAALKFTWTERRQFTCAFHPVLCNHGIVLLEGKPLTASALREINYRRRELGLPLVRCGLVEENKSPLVQQPSFSVHLPRSVGFLTHHIKRKLDAYAVKHPQEPRHVRADHPYAKVVENRNYGSSIEAMILAPPSPSEILPGDPPRPPTCGFLTR</sequence>
<accession>Q4JQW5</accession>
<accession>Q4JQY8</accession>